<comment type="function">
    <text evidence="1">Intracellular storage of molybdenum. Binds polyoxomolybdates. Can bind at least 90 molybdenum atoms per protein molecule.</text>
</comment>
<comment type="biophysicochemical properties">
    <phDependence>
        <text evidence="1">Optimum pH is 6.5 to 7.0. Above pH 7.1 molybdenum is released.</text>
    </phDependence>
</comment>
<comment type="subunit">
    <text evidence="1">Octamer consisting of 4 alpha and 4 beta chains.</text>
</comment>
<comment type="subcellular location">
    <subcellularLocation>
        <location evidence="1">Cytoplasm</location>
    </subcellularLocation>
</comment>
<comment type="induction">
    <text evidence="1">Requires molybdenum.</text>
</comment>
<comment type="mass spectrometry" mass="29120.0" method="MALDI" evidence="1"/>
<comment type="similarity">
    <text evidence="3">Belongs to the UMP kinase family. Highly divergent.</text>
</comment>
<sequence length="276" mass="29337">MTDTTNSIKHVISPLARQTLQDRDLTRPVAGKRPIRLLPWLQVVKIGGRVMDRGADAILPLVEELRKLLPEHRLLILTGAGVRARHVFSVGLDLGLPVGSLAPLAASEAGQNGHILAAMLASEGVSYVEHPTVADQLAIHLSATRAVVGSAFPPYHHHEFPGSRIPPHRADTGAFLLADAFGAAGLTIVENVDGIYTADPNGPDRGQARFLPETSATDLAKSEGPLPVDRALLDVMATARHIERVQVVNGLVPGRLTAALRGEHVGTLIRTGVRPA</sequence>
<accession>P84308</accession>
<accession>C1DFP5</accession>
<accession>Q4IT85</accession>
<reference key="1">
    <citation type="journal article" date="2009" name="J. Bacteriol.">
        <title>Genome sequence of Azotobacter vinelandii, an obligate aerobe specialized to support diverse anaerobic metabolic processes.</title>
        <authorList>
            <person name="Setubal J.C."/>
            <person name="Dos Santos P."/>
            <person name="Goldman B.S."/>
            <person name="Ertesvaag H."/>
            <person name="Espin G."/>
            <person name="Rubio L.M."/>
            <person name="Valla S."/>
            <person name="Almeida N.F."/>
            <person name="Balasubramanian D."/>
            <person name="Cromes L."/>
            <person name="Curatti L."/>
            <person name="Du Z."/>
            <person name="Godsy E."/>
            <person name="Goodner B."/>
            <person name="Hellner-Burris K."/>
            <person name="Hernandez J.A."/>
            <person name="Houmiel K."/>
            <person name="Imperial J."/>
            <person name="Kennedy C."/>
            <person name="Larson T.J."/>
            <person name="Latreille P."/>
            <person name="Ligon L.S."/>
            <person name="Lu J."/>
            <person name="Maerk M."/>
            <person name="Miller N.M."/>
            <person name="Norton S."/>
            <person name="O'Carroll I.P."/>
            <person name="Paulsen I."/>
            <person name="Raulfs E.C."/>
            <person name="Roemer R."/>
            <person name="Rosser J."/>
            <person name="Segura D."/>
            <person name="Slater S."/>
            <person name="Stricklin S.L."/>
            <person name="Studholme D.J."/>
            <person name="Sun J."/>
            <person name="Viana C.J."/>
            <person name="Wallin E."/>
            <person name="Wang B."/>
            <person name="Wheeler C."/>
            <person name="Zhu H."/>
            <person name="Dean D.R."/>
            <person name="Dixon R."/>
            <person name="Wood D."/>
        </authorList>
    </citation>
    <scope>NUCLEOTIDE SEQUENCE [LARGE SCALE GENOMIC DNA]</scope>
    <source>
        <strain>DJ / ATCC BAA-1303</strain>
    </source>
</reference>
<reference evidence="3" key="2">
    <citation type="journal article" date="2005" name="ChemBioChem">
        <title>A new type of metalloprotein: the Mo storage protein from Azotobacter vinelandii contains a polynuclear molybdenum-oxide cluster.</title>
        <authorList>
            <person name="Fenske D."/>
            <person name="Gnida M."/>
            <person name="Schneider K."/>
            <person name="Meyer-Klaucke W."/>
            <person name="Schemberg J."/>
            <person name="Henschel V."/>
            <person name="Meyer A.-K."/>
            <person name="Knochel A."/>
            <person name="Muller A."/>
        </authorList>
    </citation>
    <scope>PROTEIN SEQUENCE OF 2-28</scope>
    <scope>IDENTIFICATION</scope>
    <scope>FUNCTION</scope>
    <scope>BIOPHYSICOCHEMICAL PROPERTIES</scope>
    <scope>SUBUNIT</scope>
    <scope>SUBCELLULAR LOCATION</scope>
    <scope>INDUCTION</scope>
    <scope>MOLYBDENUM-BINDING</scope>
    <scope>MASS SPECTROMETRY</scope>
    <source>
        <strain>ATCC 13705 / OP1 / DSM 366 / NCIB 11614 / LMG 3878 / UW</strain>
    </source>
</reference>
<dbReference type="EMBL" id="CP001157">
    <property type="protein sequence ID" value="ACO80441.1"/>
    <property type="molecule type" value="Genomic_DNA"/>
</dbReference>
<dbReference type="RefSeq" id="WP_012702809.1">
    <property type="nucleotide sequence ID" value="NC_012560.1"/>
</dbReference>
<dbReference type="PDB" id="2OGX">
    <property type="method" value="X-ray"/>
    <property type="resolution" value="1.60 A"/>
    <property type="chains" value="A=1-276"/>
</dbReference>
<dbReference type="PDB" id="4F6T">
    <property type="method" value="X-ray"/>
    <property type="resolution" value="1.60 A"/>
    <property type="chains" value="A=33-276"/>
</dbReference>
<dbReference type="PDB" id="4NDO">
    <property type="method" value="X-ray"/>
    <property type="resolution" value="1.35 A"/>
    <property type="chains" value="A=1-276"/>
</dbReference>
<dbReference type="PDB" id="4NDP">
    <property type="method" value="X-ray"/>
    <property type="resolution" value="1.60 A"/>
    <property type="chains" value="A=1-276"/>
</dbReference>
<dbReference type="PDB" id="4NDQ">
    <property type="method" value="X-ray"/>
    <property type="resolution" value="1.75 A"/>
    <property type="chains" value="A=1-276"/>
</dbReference>
<dbReference type="PDB" id="4NDR">
    <property type="method" value="X-ray"/>
    <property type="resolution" value="2.00 A"/>
    <property type="chains" value="A=1-276"/>
</dbReference>
<dbReference type="PDB" id="5O5W">
    <property type="method" value="X-ray"/>
    <property type="resolution" value="1.70 A"/>
    <property type="chains" value="A=1-276"/>
</dbReference>
<dbReference type="PDB" id="6GU5">
    <property type="method" value="X-ray"/>
    <property type="resolution" value="1.90 A"/>
    <property type="chains" value="A=2-276"/>
</dbReference>
<dbReference type="PDB" id="6GUJ">
    <property type="method" value="X-ray"/>
    <property type="resolution" value="2.10 A"/>
    <property type="chains" value="A=2-276"/>
</dbReference>
<dbReference type="PDB" id="6GWB">
    <property type="method" value="X-ray"/>
    <property type="resolution" value="1.90 A"/>
    <property type="chains" value="A=2-276"/>
</dbReference>
<dbReference type="PDB" id="6GWV">
    <property type="method" value="X-ray"/>
    <property type="resolution" value="2.80 A"/>
    <property type="chains" value="A/D/F/G/J/L/M/P/R=2-276"/>
</dbReference>
<dbReference type="PDB" id="6GX4">
    <property type="method" value="X-ray"/>
    <property type="resolution" value="1.90 A"/>
    <property type="chains" value="A=2-276"/>
</dbReference>
<dbReference type="PDB" id="6H6W">
    <property type="method" value="X-ray"/>
    <property type="resolution" value="1.90 A"/>
    <property type="chains" value="A=2-276"/>
</dbReference>
<dbReference type="PDB" id="6H73">
    <property type="method" value="X-ray"/>
    <property type="resolution" value="2.30 A"/>
    <property type="chains" value="A=2-276"/>
</dbReference>
<dbReference type="PDB" id="6H74">
    <property type="method" value="X-ray"/>
    <property type="resolution" value="1.80 A"/>
    <property type="chains" value="A=2-276"/>
</dbReference>
<dbReference type="PDB" id="6H8B">
    <property type="method" value="X-ray"/>
    <property type="resolution" value="1.90 A"/>
    <property type="chains" value="A=2-276"/>
</dbReference>
<dbReference type="PDB" id="6H8H">
    <property type="method" value="X-ray"/>
    <property type="resolution" value="1.90 A"/>
    <property type="chains" value="A=2-276"/>
</dbReference>
<dbReference type="PDB" id="6RIS">
    <property type="method" value="X-ray"/>
    <property type="resolution" value="2.10 A"/>
    <property type="chains" value="A=2-276"/>
</dbReference>
<dbReference type="PDB" id="6RJ4">
    <property type="method" value="X-ray"/>
    <property type="resolution" value="1.90 A"/>
    <property type="chains" value="A/C/E=2-276"/>
</dbReference>
<dbReference type="PDB" id="6RKD">
    <property type="method" value="EM"/>
    <property type="resolution" value="3.20 A"/>
    <property type="chains" value="A/C/E/G/I/K=1-276"/>
</dbReference>
<dbReference type="PDB" id="6RKE">
    <property type="method" value="X-ray"/>
    <property type="resolution" value="1.70 A"/>
    <property type="chains" value="A/C/E/G/I/K=2-276"/>
</dbReference>
<dbReference type="PDB" id="6YT3">
    <property type="method" value="X-ray"/>
    <property type="resolution" value="2.85 A"/>
    <property type="chains" value="A=1-276"/>
</dbReference>
<dbReference type="PDB" id="7Z5J">
    <property type="method" value="EM"/>
    <property type="resolution" value="2.58 A"/>
    <property type="chains" value="A/C/E/G/I/K=2-276"/>
</dbReference>
<dbReference type="PDB" id="7ZQQ">
    <property type="method" value="X-ray"/>
    <property type="resolution" value="1.75 A"/>
    <property type="chains" value="A=2-276"/>
</dbReference>
<dbReference type="PDB" id="7ZR4">
    <property type="method" value="X-ray"/>
    <property type="resolution" value="1.70 A"/>
    <property type="chains" value="A=2-276"/>
</dbReference>
<dbReference type="PDB" id="7ZSE">
    <property type="method" value="X-ray"/>
    <property type="resolution" value="1.40 A"/>
    <property type="chains" value="A=2-276"/>
</dbReference>
<dbReference type="PDBsum" id="2OGX"/>
<dbReference type="PDBsum" id="4F6T"/>
<dbReference type="PDBsum" id="4NDO"/>
<dbReference type="PDBsum" id="4NDP"/>
<dbReference type="PDBsum" id="4NDQ"/>
<dbReference type="PDBsum" id="4NDR"/>
<dbReference type="PDBsum" id="5O5W"/>
<dbReference type="PDBsum" id="6GU5"/>
<dbReference type="PDBsum" id="6GUJ"/>
<dbReference type="PDBsum" id="6GWB"/>
<dbReference type="PDBsum" id="6GWV"/>
<dbReference type="PDBsum" id="6GX4"/>
<dbReference type="PDBsum" id="6H6W"/>
<dbReference type="PDBsum" id="6H73"/>
<dbReference type="PDBsum" id="6H74"/>
<dbReference type="PDBsum" id="6H8B"/>
<dbReference type="PDBsum" id="6H8H"/>
<dbReference type="PDBsum" id="6RIS"/>
<dbReference type="PDBsum" id="6RJ4"/>
<dbReference type="PDBsum" id="6RKD"/>
<dbReference type="PDBsum" id="6RKE"/>
<dbReference type="PDBsum" id="6YT3"/>
<dbReference type="PDBsum" id="7Z5J"/>
<dbReference type="PDBsum" id="7ZQQ"/>
<dbReference type="PDBsum" id="7ZR4"/>
<dbReference type="PDBsum" id="7ZSE"/>
<dbReference type="EMDB" id="EMD-14522"/>
<dbReference type="EMDB" id="EMD-4907"/>
<dbReference type="SMR" id="P84308"/>
<dbReference type="STRING" id="322710.Avin_43200"/>
<dbReference type="EnsemblBacteria" id="ACO80441">
    <property type="protein sequence ID" value="ACO80441"/>
    <property type="gene ID" value="Avin_43200"/>
</dbReference>
<dbReference type="GeneID" id="88187232"/>
<dbReference type="KEGG" id="avn:Avin_43200"/>
<dbReference type="eggNOG" id="COG0528">
    <property type="taxonomic scope" value="Bacteria"/>
</dbReference>
<dbReference type="HOGENOM" id="CLU_1008069_0_0_6"/>
<dbReference type="OrthoDB" id="581602at2"/>
<dbReference type="EvolutionaryTrace" id="P84308"/>
<dbReference type="Proteomes" id="UP000002424">
    <property type="component" value="Chromosome"/>
</dbReference>
<dbReference type="GO" id="GO:0005737">
    <property type="term" value="C:cytoplasm"/>
    <property type="evidence" value="ECO:0000314"/>
    <property type="project" value="UniProtKB"/>
</dbReference>
<dbReference type="GO" id="GO:0030151">
    <property type="term" value="F:molybdenum ion binding"/>
    <property type="evidence" value="ECO:0000314"/>
    <property type="project" value="UniProtKB"/>
</dbReference>
<dbReference type="GO" id="GO:0045735">
    <property type="term" value="F:nutrient reservoir activity"/>
    <property type="evidence" value="ECO:0007669"/>
    <property type="project" value="UniProtKB-KW"/>
</dbReference>
<dbReference type="CDD" id="cd04255">
    <property type="entry name" value="AAK_UMPK-MosAB"/>
    <property type="match status" value="1"/>
</dbReference>
<dbReference type="Gene3D" id="3.40.1160.10">
    <property type="entry name" value="Acetylglutamate kinase-like"/>
    <property type="match status" value="1"/>
</dbReference>
<dbReference type="InterPro" id="IPR036393">
    <property type="entry name" value="AceGlu_kinase-like_sf"/>
</dbReference>
<dbReference type="InterPro" id="IPR001048">
    <property type="entry name" value="Asp/Glu/Uridylate_kinase"/>
</dbReference>
<dbReference type="InterPro" id="IPR030669">
    <property type="entry name" value="MoSto_subunit_alpha/beta"/>
</dbReference>
<dbReference type="Pfam" id="PF00696">
    <property type="entry name" value="AA_kinase"/>
    <property type="match status" value="1"/>
</dbReference>
<dbReference type="PIRSF" id="PIRSF039097">
    <property type="entry name" value="MoSto_subunit"/>
    <property type="match status" value="1"/>
</dbReference>
<dbReference type="SUPFAM" id="SSF53633">
    <property type="entry name" value="Carbamate kinase-like"/>
    <property type="match status" value="1"/>
</dbReference>
<gene>
    <name evidence="2" type="primary">mosA</name>
    <name type="ordered locus">Avin_43200</name>
</gene>
<proteinExistence type="evidence at protein level"/>
<feature type="initiator methionine" description="Removed" evidence="1">
    <location>
        <position position="1"/>
    </location>
</feature>
<feature type="chain" id="PRO_0000143931" description="Molybdenum storage protein subunit alpha">
    <location>
        <begin position="2"/>
        <end position="276"/>
    </location>
</feature>
<feature type="turn" evidence="6">
    <location>
        <begin position="14"/>
        <end position="17"/>
    </location>
</feature>
<feature type="helix" evidence="6">
    <location>
        <begin position="23"/>
        <end position="30"/>
    </location>
</feature>
<feature type="strand" evidence="4">
    <location>
        <begin position="41"/>
        <end position="46"/>
    </location>
</feature>
<feature type="helix" evidence="4">
    <location>
        <begin position="48"/>
        <end position="51"/>
    </location>
</feature>
<feature type="helix" evidence="4">
    <location>
        <begin position="52"/>
        <end position="54"/>
    </location>
</feature>
<feature type="helix" evidence="4">
    <location>
        <begin position="55"/>
        <end position="68"/>
    </location>
</feature>
<feature type="turn" evidence="4">
    <location>
        <begin position="69"/>
        <end position="71"/>
    </location>
</feature>
<feature type="strand" evidence="4">
    <location>
        <begin position="73"/>
        <end position="78"/>
    </location>
</feature>
<feature type="helix" evidence="4">
    <location>
        <begin position="82"/>
        <end position="93"/>
    </location>
</feature>
<feature type="helix" evidence="4">
    <location>
        <begin position="98"/>
        <end position="120"/>
    </location>
</feature>
<feature type="helix" evidence="4">
    <location>
        <begin position="121"/>
        <end position="123"/>
    </location>
</feature>
<feature type="helix" evidence="4">
    <location>
        <begin position="130"/>
        <end position="143"/>
    </location>
</feature>
<feature type="strand" evidence="4">
    <location>
        <begin position="144"/>
        <end position="150"/>
    </location>
</feature>
<feature type="helix" evidence="4">
    <location>
        <begin position="156"/>
        <end position="158"/>
    </location>
</feature>
<feature type="strand" evidence="4">
    <location>
        <begin position="161"/>
        <end position="165"/>
    </location>
</feature>
<feature type="helix" evidence="4">
    <location>
        <begin position="170"/>
        <end position="181"/>
    </location>
</feature>
<feature type="strand" evidence="4">
    <location>
        <begin position="184"/>
        <end position="194"/>
    </location>
</feature>
<feature type="strand" evidence="4">
    <location>
        <begin position="196"/>
        <end position="198"/>
    </location>
</feature>
<feature type="strand" evidence="5">
    <location>
        <begin position="200"/>
        <end position="202"/>
    </location>
</feature>
<feature type="helix" evidence="4">
    <location>
        <begin position="205"/>
        <end position="207"/>
    </location>
</feature>
<feature type="strand" evidence="4">
    <location>
        <begin position="212"/>
        <end position="215"/>
    </location>
</feature>
<feature type="helix" evidence="4">
    <location>
        <begin position="216"/>
        <end position="221"/>
    </location>
</feature>
<feature type="helix" evidence="4">
    <location>
        <begin position="230"/>
        <end position="237"/>
    </location>
</feature>
<feature type="strand" evidence="4">
    <location>
        <begin position="244"/>
        <end position="249"/>
    </location>
</feature>
<feature type="helix" evidence="4">
    <location>
        <begin position="255"/>
        <end position="260"/>
    </location>
</feature>
<feature type="strand" evidence="4">
    <location>
        <begin position="265"/>
        <end position="270"/>
    </location>
</feature>
<evidence type="ECO:0000269" key="1">
    <source>
    </source>
</evidence>
<evidence type="ECO:0000303" key="2">
    <source>
    </source>
</evidence>
<evidence type="ECO:0000305" key="3"/>
<evidence type="ECO:0007829" key="4">
    <source>
        <dbReference type="PDB" id="4NDO"/>
    </source>
</evidence>
<evidence type="ECO:0007829" key="5">
    <source>
        <dbReference type="PDB" id="6GWV"/>
    </source>
</evidence>
<evidence type="ECO:0007829" key="6">
    <source>
        <dbReference type="PDB" id="6RKE"/>
    </source>
</evidence>
<name>MOSA_AZOVD</name>
<organism>
    <name type="scientific">Azotobacter vinelandii (strain DJ / ATCC BAA-1303)</name>
    <dbReference type="NCBI Taxonomy" id="322710"/>
    <lineage>
        <taxon>Bacteria</taxon>
        <taxon>Pseudomonadati</taxon>
        <taxon>Pseudomonadota</taxon>
        <taxon>Gammaproteobacteria</taxon>
        <taxon>Pseudomonadales</taxon>
        <taxon>Pseudomonadaceae</taxon>
        <taxon>Azotobacter</taxon>
    </lineage>
</organism>
<keyword id="KW-0002">3D-structure</keyword>
<keyword id="KW-0963">Cytoplasm</keyword>
<keyword id="KW-0903">Direct protein sequencing</keyword>
<keyword id="KW-0479">Metal-binding</keyword>
<keyword id="KW-0500">Molybdenum</keyword>
<keyword id="KW-0758">Storage protein</keyword>
<protein>
    <recommendedName>
        <fullName>Molybdenum storage protein subunit alpha</fullName>
    </recommendedName>
    <alternativeName>
        <fullName>Mo storage protein subunit alpha</fullName>
        <shortName>MoSto subunit alpha</shortName>
    </alternativeName>
</protein>